<organism>
    <name type="scientific">Jannaschia sp. (strain CCS1)</name>
    <dbReference type="NCBI Taxonomy" id="290400"/>
    <lineage>
        <taxon>Bacteria</taxon>
        <taxon>Pseudomonadati</taxon>
        <taxon>Pseudomonadota</taxon>
        <taxon>Alphaproteobacteria</taxon>
        <taxon>Rhodobacterales</taxon>
        <taxon>Roseobacteraceae</taxon>
        <taxon>Jannaschia</taxon>
    </lineage>
</organism>
<name>LEUD_JANSC</name>
<sequence length="201" mass="22017">MDKFTTLTGIAAPMPLINVDTDMIIPKQFLKTIKRSGLGANLFDEMRFDDDGNEIPDFVLNKPAYRDAQILVAGDNFGCGSSREHAPWALLDFGIRCVIATSFADIFYNNCFKNGILPIVLLQEQVDMLMDDAERGANAVVSVDLESQTITGPDGGTISFEVDAFRKHCLLNGLDDIGLTLEKAPSIKAFEAEAAQARPWV</sequence>
<gene>
    <name evidence="1" type="primary">leuD</name>
    <name type="ordered locus">Jann_0123</name>
</gene>
<protein>
    <recommendedName>
        <fullName evidence="1">3-isopropylmalate dehydratase small subunit</fullName>
        <ecNumber evidence="1">4.2.1.33</ecNumber>
    </recommendedName>
    <alternativeName>
        <fullName evidence="1">Alpha-IPM isomerase</fullName>
        <shortName evidence="1">IPMI</shortName>
    </alternativeName>
    <alternativeName>
        <fullName evidence="1">Isopropylmalate isomerase</fullName>
    </alternativeName>
</protein>
<accession>Q28W72</accession>
<proteinExistence type="inferred from homology"/>
<reference key="1">
    <citation type="submission" date="2006-02" db="EMBL/GenBank/DDBJ databases">
        <title>Complete sequence of chromosome of Jannaschia sp. CCS1.</title>
        <authorList>
            <consortium name="US DOE Joint Genome Institute"/>
            <person name="Copeland A."/>
            <person name="Lucas S."/>
            <person name="Lapidus A."/>
            <person name="Barry K."/>
            <person name="Detter J.C."/>
            <person name="Glavina del Rio T."/>
            <person name="Hammon N."/>
            <person name="Israni S."/>
            <person name="Pitluck S."/>
            <person name="Brettin T."/>
            <person name="Bruce D."/>
            <person name="Han C."/>
            <person name="Tapia R."/>
            <person name="Gilna P."/>
            <person name="Chertkov O."/>
            <person name="Saunders E."/>
            <person name="Schmutz J."/>
            <person name="Larimer F."/>
            <person name="Land M."/>
            <person name="Kyrpides N."/>
            <person name="Lykidis A."/>
            <person name="Moran M.A."/>
            <person name="Belas R."/>
            <person name="Ye W."/>
            <person name="Buchan A."/>
            <person name="Gonzalez J.M."/>
            <person name="Schell M.A."/>
            <person name="Richardson P."/>
        </authorList>
    </citation>
    <scope>NUCLEOTIDE SEQUENCE [LARGE SCALE GENOMIC DNA]</scope>
    <source>
        <strain>CCS1</strain>
    </source>
</reference>
<keyword id="KW-0028">Amino-acid biosynthesis</keyword>
<keyword id="KW-0100">Branched-chain amino acid biosynthesis</keyword>
<keyword id="KW-0432">Leucine biosynthesis</keyword>
<keyword id="KW-0456">Lyase</keyword>
<keyword id="KW-1185">Reference proteome</keyword>
<comment type="function">
    <text evidence="1">Catalyzes the isomerization between 2-isopropylmalate and 3-isopropylmalate, via the formation of 2-isopropylmaleate.</text>
</comment>
<comment type="catalytic activity">
    <reaction evidence="1">
        <text>(2R,3S)-3-isopropylmalate = (2S)-2-isopropylmalate</text>
        <dbReference type="Rhea" id="RHEA:32287"/>
        <dbReference type="ChEBI" id="CHEBI:1178"/>
        <dbReference type="ChEBI" id="CHEBI:35121"/>
        <dbReference type="EC" id="4.2.1.33"/>
    </reaction>
</comment>
<comment type="pathway">
    <text evidence="1">Amino-acid biosynthesis; L-leucine biosynthesis; L-leucine from 3-methyl-2-oxobutanoate: step 2/4.</text>
</comment>
<comment type="subunit">
    <text evidence="1">Heterodimer of LeuC and LeuD.</text>
</comment>
<comment type="similarity">
    <text evidence="1">Belongs to the LeuD family. LeuD type 1 subfamily.</text>
</comment>
<feature type="chain" id="PRO_1000063775" description="3-isopropylmalate dehydratase small subunit">
    <location>
        <begin position="1"/>
        <end position="201"/>
    </location>
</feature>
<dbReference type="EC" id="4.2.1.33" evidence="1"/>
<dbReference type="EMBL" id="CP000264">
    <property type="protein sequence ID" value="ABD53040.1"/>
    <property type="molecule type" value="Genomic_DNA"/>
</dbReference>
<dbReference type="RefSeq" id="WP_011453249.1">
    <property type="nucleotide sequence ID" value="NC_007802.1"/>
</dbReference>
<dbReference type="SMR" id="Q28W72"/>
<dbReference type="STRING" id="290400.Jann_0123"/>
<dbReference type="KEGG" id="jan:Jann_0123"/>
<dbReference type="eggNOG" id="COG0066">
    <property type="taxonomic scope" value="Bacteria"/>
</dbReference>
<dbReference type="HOGENOM" id="CLU_081378_0_3_5"/>
<dbReference type="OrthoDB" id="9777465at2"/>
<dbReference type="UniPathway" id="UPA00048">
    <property type="reaction ID" value="UER00071"/>
</dbReference>
<dbReference type="Proteomes" id="UP000008326">
    <property type="component" value="Chromosome"/>
</dbReference>
<dbReference type="GO" id="GO:0009316">
    <property type="term" value="C:3-isopropylmalate dehydratase complex"/>
    <property type="evidence" value="ECO:0007669"/>
    <property type="project" value="InterPro"/>
</dbReference>
<dbReference type="GO" id="GO:0003861">
    <property type="term" value="F:3-isopropylmalate dehydratase activity"/>
    <property type="evidence" value="ECO:0007669"/>
    <property type="project" value="UniProtKB-UniRule"/>
</dbReference>
<dbReference type="GO" id="GO:0009098">
    <property type="term" value="P:L-leucine biosynthetic process"/>
    <property type="evidence" value="ECO:0007669"/>
    <property type="project" value="UniProtKB-UniRule"/>
</dbReference>
<dbReference type="CDD" id="cd01577">
    <property type="entry name" value="IPMI_Swivel"/>
    <property type="match status" value="1"/>
</dbReference>
<dbReference type="FunFam" id="3.20.19.10:FF:000003">
    <property type="entry name" value="3-isopropylmalate dehydratase small subunit"/>
    <property type="match status" value="1"/>
</dbReference>
<dbReference type="Gene3D" id="3.20.19.10">
    <property type="entry name" value="Aconitase, domain 4"/>
    <property type="match status" value="1"/>
</dbReference>
<dbReference type="HAMAP" id="MF_01031">
    <property type="entry name" value="LeuD_type1"/>
    <property type="match status" value="1"/>
</dbReference>
<dbReference type="InterPro" id="IPR004431">
    <property type="entry name" value="3-IsopropMal_deHydase_ssu"/>
</dbReference>
<dbReference type="InterPro" id="IPR015928">
    <property type="entry name" value="Aconitase/3IPM_dehydase_swvl"/>
</dbReference>
<dbReference type="InterPro" id="IPR000573">
    <property type="entry name" value="AconitaseA/IPMdHydase_ssu_swvl"/>
</dbReference>
<dbReference type="InterPro" id="IPR033940">
    <property type="entry name" value="IPMI_Swivel"/>
</dbReference>
<dbReference type="InterPro" id="IPR050075">
    <property type="entry name" value="LeuD"/>
</dbReference>
<dbReference type="NCBIfam" id="TIGR00171">
    <property type="entry name" value="leuD"/>
    <property type="match status" value="1"/>
</dbReference>
<dbReference type="NCBIfam" id="NF002458">
    <property type="entry name" value="PRK01641.1"/>
    <property type="match status" value="1"/>
</dbReference>
<dbReference type="PANTHER" id="PTHR43345:SF5">
    <property type="entry name" value="3-ISOPROPYLMALATE DEHYDRATASE SMALL SUBUNIT"/>
    <property type="match status" value="1"/>
</dbReference>
<dbReference type="PANTHER" id="PTHR43345">
    <property type="entry name" value="3-ISOPROPYLMALATE DEHYDRATASE SMALL SUBUNIT 2-RELATED-RELATED"/>
    <property type="match status" value="1"/>
</dbReference>
<dbReference type="Pfam" id="PF00694">
    <property type="entry name" value="Aconitase_C"/>
    <property type="match status" value="1"/>
</dbReference>
<dbReference type="SUPFAM" id="SSF52016">
    <property type="entry name" value="LeuD/IlvD-like"/>
    <property type="match status" value="1"/>
</dbReference>
<evidence type="ECO:0000255" key="1">
    <source>
        <dbReference type="HAMAP-Rule" id="MF_01031"/>
    </source>
</evidence>